<reference key="1">
    <citation type="submission" date="2009-06" db="EMBL/GenBank/DDBJ databases">
        <title>Complete sequence of chromosome of Geopacillus sp. WCH70.</title>
        <authorList>
            <consortium name="US DOE Joint Genome Institute"/>
            <person name="Lucas S."/>
            <person name="Copeland A."/>
            <person name="Lapidus A."/>
            <person name="Glavina del Rio T."/>
            <person name="Dalin E."/>
            <person name="Tice H."/>
            <person name="Bruce D."/>
            <person name="Goodwin L."/>
            <person name="Pitluck S."/>
            <person name="Chertkov O."/>
            <person name="Brettin T."/>
            <person name="Detter J.C."/>
            <person name="Han C."/>
            <person name="Larimer F."/>
            <person name="Land M."/>
            <person name="Hauser L."/>
            <person name="Kyrpides N."/>
            <person name="Mikhailova N."/>
            <person name="Brumm P."/>
            <person name="Mead D.A."/>
            <person name="Richardson P."/>
        </authorList>
    </citation>
    <scope>NUCLEOTIDE SEQUENCE [LARGE SCALE GENOMIC DNA]</scope>
    <source>
        <strain>WCH70</strain>
    </source>
</reference>
<accession>C5D5S3</accession>
<organism>
    <name type="scientific">Geobacillus sp. (strain WCH70)</name>
    <dbReference type="NCBI Taxonomy" id="471223"/>
    <lineage>
        <taxon>Bacteria</taxon>
        <taxon>Bacillati</taxon>
        <taxon>Bacillota</taxon>
        <taxon>Bacilli</taxon>
        <taxon>Bacillales</taxon>
        <taxon>Anoxybacillaceae</taxon>
        <taxon>Geobacillus</taxon>
    </lineage>
</organism>
<comment type="subcellular location">
    <subcellularLocation>
        <location evidence="1">Spore core</location>
    </subcellularLocation>
</comment>
<comment type="induction">
    <text evidence="1">Expressed only in the forespore compartment of sporulating cells.</text>
</comment>
<comment type="similarity">
    <text evidence="1">Belongs to the SspK family.</text>
</comment>
<feature type="chain" id="PRO_1000215330" description="Small, acid-soluble spore protein K">
    <location>
        <begin position="1"/>
        <end position="53"/>
    </location>
</feature>
<feature type="region of interest" description="Disordered" evidence="2">
    <location>
        <begin position="1"/>
        <end position="53"/>
    </location>
</feature>
<feature type="compositionally biased region" description="Basic and acidic residues" evidence="2">
    <location>
        <begin position="16"/>
        <end position="28"/>
    </location>
</feature>
<feature type="compositionally biased region" description="Basic and acidic residues" evidence="2">
    <location>
        <begin position="39"/>
        <end position="53"/>
    </location>
</feature>
<dbReference type="EMBL" id="CP001638">
    <property type="protein sequence ID" value="ACS23371.1"/>
    <property type="molecule type" value="Genomic_DNA"/>
</dbReference>
<dbReference type="SMR" id="C5D5S3"/>
<dbReference type="STRING" id="471223.GWCH70_0460"/>
<dbReference type="KEGG" id="gwc:GWCH70_0460"/>
<dbReference type="eggNOG" id="ENOG5033JD2">
    <property type="taxonomic scope" value="Bacteria"/>
</dbReference>
<dbReference type="HOGENOM" id="CLU_204383_0_0_9"/>
<dbReference type="OrthoDB" id="2382188at2"/>
<dbReference type="GO" id="GO:0042601">
    <property type="term" value="C:endospore-forming forespore"/>
    <property type="evidence" value="ECO:0007669"/>
    <property type="project" value="InterPro"/>
</dbReference>
<dbReference type="GO" id="GO:0030436">
    <property type="term" value="P:asexual sporulation"/>
    <property type="evidence" value="ECO:0007669"/>
    <property type="project" value="UniProtKB-UniRule"/>
</dbReference>
<dbReference type="GO" id="GO:0030435">
    <property type="term" value="P:sporulation resulting in formation of a cellular spore"/>
    <property type="evidence" value="ECO:0007669"/>
    <property type="project" value="UniProtKB-KW"/>
</dbReference>
<dbReference type="HAMAP" id="MF_01504">
    <property type="entry name" value="SspK"/>
    <property type="match status" value="1"/>
</dbReference>
<dbReference type="InterPro" id="IPR012611">
    <property type="entry name" value="SASP_SspK"/>
</dbReference>
<dbReference type="NCBIfam" id="NF002843">
    <property type="entry name" value="PRK03081.1"/>
    <property type="match status" value="1"/>
</dbReference>
<dbReference type="NCBIfam" id="TIGR03091">
    <property type="entry name" value="SASP_sspK"/>
    <property type="match status" value="1"/>
</dbReference>
<dbReference type="Pfam" id="PF08176">
    <property type="entry name" value="SspK"/>
    <property type="match status" value="1"/>
</dbReference>
<gene>
    <name evidence="1" type="primary">sspK</name>
    <name type="ordered locus">GWCH70_0460</name>
</gene>
<sequence>MRNKERNFPNQNNNKFEGEPRAKAEYASKRANGTTNTHPQERMHASGKRDDNF</sequence>
<protein>
    <recommendedName>
        <fullName evidence="1">Small, acid-soluble spore protein K</fullName>
        <shortName evidence="1">SASP K</shortName>
    </recommendedName>
</protein>
<keyword id="KW-0749">Sporulation</keyword>
<evidence type="ECO:0000255" key="1">
    <source>
        <dbReference type="HAMAP-Rule" id="MF_01504"/>
    </source>
</evidence>
<evidence type="ECO:0000256" key="2">
    <source>
        <dbReference type="SAM" id="MobiDB-lite"/>
    </source>
</evidence>
<proteinExistence type="inferred from homology"/>
<name>SSPK_GEOSW</name>